<accession>C1CKY8</accession>
<gene>
    <name evidence="1" type="primary">guaC</name>
    <name type="ordered locus">SPP_1287</name>
</gene>
<protein>
    <recommendedName>
        <fullName evidence="1">GMP reductase</fullName>
        <ecNumber evidence="1">1.7.1.7</ecNumber>
    </recommendedName>
    <alternativeName>
        <fullName evidence="1">Guanosine 5'-monophosphate oxidoreductase</fullName>
        <shortName evidence="1">Guanosine monophosphate reductase</shortName>
    </alternativeName>
</protein>
<organism>
    <name type="scientific">Streptococcus pneumoniae (strain P1031)</name>
    <dbReference type="NCBI Taxonomy" id="488223"/>
    <lineage>
        <taxon>Bacteria</taxon>
        <taxon>Bacillati</taxon>
        <taxon>Bacillota</taxon>
        <taxon>Bacilli</taxon>
        <taxon>Lactobacillales</taxon>
        <taxon>Streptococcaceae</taxon>
        <taxon>Streptococcus</taxon>
    </lineage>
</organism>
<name>GUAC_STRZP</name>
<feature type="chain" id="PRO_1000185060" description="GMP reductase">
    <location>
        <begin position="1"/>
        <end position="328"/>
    </location>
</feature>
<feature type="active site" description="Thioimidate intermediate" evidence="1">
    <location>
        <position position="176"/>
    </location>
</feature>
<feature type="binding site" evidence="1">
    <location>
        <begin position="205"/>
        <end position="228"/>
    </location>
    <ligand>
        <name>NADP(+)</name>
        <dbReference type="ChEBI" id="CHEBI:58349"/>
    </ligand>
</feature>
<evidence type="ECO:0000255" key="1">
    <source>
        <dbReference type="HAMAP-Rule" id="MF_01511"/>
    </source>
</evidence>
<comment type="function">
    <text evidence="1">Catalyzes the irreversible NADPH-dependent deamination of GMP to IMP. It functions in the conversion of nucleobase, nucleoside and nucleotide derivatives of G to A nucleotides, and in maintaining the intracellular balance of A and G nucleotides.</text>
</comment>
<comment type="catalytic activity">
    <reaction evidence="1">
        <text>IMP + NH4(+) + NADP(+) = GMP + NADPH + 2 H(+)</text>
        <dbReference type="Rhea" id="RHEA:17185"/>
        <dbReference type="ChEBI" id="CHEBI:15378"/>
        <dbReference type="ChEBI" id="CHEBI:28938"/>
        <dbReference type="ChEBI" id="CHEBI:57783"/>
        <dbReference type="ChEBI" id="CHEBI:58053"/>
        <dbReference type="ChEBI" id="CHEBI:58115"/>
        <dbReference type="ChEBI" id="CHEBI:58349"/>
        <dbReference type="EC" id="1.7.1.7"/>
    </reaction>
</comment>
<comment type="similarity">
    <text evidence="1">Belongs to the IMPDH/GMPR family. GuaC type 2 subfamily.</text>
</comment>
<keyword id="KW-0521">NADP</keyword>
<keyword id="KW-0560">Oxidoreductase</keyword>
<reference key="1">
    <citation type="journal article" date="2010" name="Genome Biol.">
        <title>Structure and dynamics of the pan-genome of Streptococcus pneumoniae and closely related species.</title>
        <authorList>
            <person name="Donati C."/>
            <person name="Hiller N.L."/>
            <person name="Tettelin H."/>
            <person name="Muzzi A."/>
            <person name="Croucher N.J."/>
            <person name="Angiuoli S.V."/>
            <person name="Oggioni M."/>
            <person name="Dunning Hotopp J.C."/>
            <person name="Hu F.Z."/>
            <person name="Riley D.R."/>
            <person name="Covacci A."/>
            <person name="Mitchell T.J."/>
            <person name="Bentley S.D."/>
            <person name="Kilian M."/>
            <person name="Ehrlich G.D."/>
            <person name="Rappuoli R."/>
            <person name="Moxon E.R."/>
            <person name="Masignani V."/>
        </authorList>
    </citation>
    <scope>NUCLEOTIDE SEQUENCE [LARGE SCALE GENOMIC DNA]</scope>
    <source>
        <strain>P1031</strain>
    </source>
</reference>
<proteinExistence type="inferred from homology"/>
<dbReference type="EC" id="1.7.1.7" evidence="1"/>
<dbReference type="EMBL" id="CP000920">
    <property type="protein sequence ID" value="ACO21164.1"/>
    <property type="molecule type" value="Genomic_DNA"/>
</dbReference>
<dbReference type="RefSeq" id="WP_000931157.1">
    <property type="nucleotide sequence ID" value="NC_012467.1"/>
</dbReference>
<dbReference type="SMR" id="C1CKY8"/>
<dbReference type="KEGG" id="spp:SPP_1287"/>
<dbReference type="HOGENOM" id="CLU_022552_5_0_9"/>
<dbReference type="GO" id="GO:0005829">
    <property type="term" value="C:cytosol"/>
    <property type="evidence" value="ECO:0007669"/>
    <property type="project" value="TreeGrafter"/>
</dbReference>
<dbReference type="GO" id="GO:1902560">
    <property type="term" value="C:GMP reductase complex"/>
    <property type="evidence" value="ECO:0007669"/>
    <property type="project" value="InterPro"/>
</dbReference>
<dbReference type="GO" id="GO:0003920">
    <property type="term" value="F:GMP reductase activity"/>
    <property type="evidence" value="ECO:0007669"/>
    <property type="project" value="UniProtKB-UniRule"/>
</dbReference>
<dbReference type="GO" id="GO:0006163">
    <property type="term" value="P:purine nucleotide metabolic process"/>
    <property type="evidence" value="ECO:0007669"/>
    <property type="project" value="UniProtKB-UniRule"/>
</dbReference>
<dbReference type="CDD" id="cd00381">
    <property type="entry name" value="IMPDH"/>
    <property type="match status" value="1"/>
</dbReference>
<dbReference type="FunFam" id="3.20.20.70:FF:000079">
    <property type="entry name" value="GMP reductase"/>
    <property type="match status" value="1"/>
</dbReference>
<dbReference type="Gene3D" id="3.20.20.70">
    <property type="entry name" value="Aldolase class I"/>
    <property type="match status" value="1"/>
</dbReference>
<dbReference type="HAMAP" id="MF_01511">
    <property type="entry name" value="GMP_reduct_type2"/>
    <property type="match status" value="1"/>
</dbReference>
<dbReference type="InterPro" id="IPR013785">
    <property type="entry name" value="Aldolase_TIM"/>
</dbReference>
<dbReference type="InterPro" id="IPR050139">
    <property type="entry name" value="GMP_reductase"/>
</dbReference>
<dbReference type="InterPro" id="IPR005994">
    <property type="entry name" value="GuaC_type_2"/>
</dbReference>
<dbReference type="InterPro" id="IPR015875">
    <property type="entry name" value="IMP_DH/GMP_Rdtase_CS"/>
</dbReference>
<dbReference type="InterPro" id="IPR001093">
    <property type="entry name" value="IMP_DH_GMPRt"/>
</dbReference>
<dbReference type="NCBIfam" id="TIGR01306">
    <property type="entry name" value="GMP_reduct_2"/>
    <property type="match status" value="1"/>
</dbReference>
<dbReference type="NCBIfam" id="NF003966">
    <property type="entry name" value="PRK05458.1"/>
    <property type="match status" value="1"/>
</dbReference>
<dbReference type="PANTHER" id="PTHR43170">
    <property type="entry name" value="GMP REDUCTASE"/>
    <property type="match status" value="1"/>
</dbReference>
<dbReference type="PANTHER" id="PTHR43170:SF5">
    <property type="entry name" value="GMP REDUCTASE"/>
    <property type="match status" value="1"/>
</dbReference>
<dbReference type="Pfam" id="PF00478">
    <property type="entry name" value="IMPDH"/>
    <property type="match status" value="1"/>
</dbReference>
<dbReference type="PIRSF" id="PIRSF036500">
    <property type="entry name" value="GMP_red_Firmic"/>
    <property type="match status" value="1"/>
</dbReference>
<dbReference type="SMART" id="SM01240">
    <property type="entry name" value="IMPDH"/>
    <property type="match status" value="1"/>
</dbReference>
<dbReference type="SUPFAM" id="SSF51412">
    <property type="entry name" value="Inosine monophosphate dehydrogenase (IMPDH)"/>
    <property type="match status" value="1"/>
</dbReference>
<dbReference type="PROSITE" id="PS00487">
    <property type="entry name" value="IMP_DH_GMP_RED"/>
    <property type="match status" value="1"/>
</dbReference>
<sequence length="328" mass="35952">MLNEFPIFDYEDIQLIPNKCVIKSRAEADTSVTLGNHTFKLPVVPANMQTILDENVAEQLAKGGYFYIMHRFDEAGRIPFIKRMHDQGLIASISVGVKDYEYDFVRQLKADAPEYITIDIAHGHADSVISMIQHIKKELPDTFVIAGNVGTPEAVRELENAGADATKVGIGPGKVCITKVKTGFGTGGWQLAALRWCAKAARKPIIADGGIRTHGDIAKSIRFGASMIMIGSLFAGHIESPGKTIEVDGEQFKEYYGSASQYQKGAYKNVEGKRILLPAKGHLQDTLTEMEQDLQSAISYAGGRQVADLKHVDYVIVKNSIWNGDASH</sequence>